<organism>
    <name type="scientific">Homo sapiens</name>
    <name type="common">Human</name>
    <dbReference type="NCBI Taxonomy" id="9606"/>
    <lineage>
        <taxon>Eukaryota</taxon>
        <taxon>Metazoa</taxon>
        <taxon>Chordata</taxon>
        <taxon>Craniata</taxon>
        <taxon>Vertebrata</taxon>
        <taxon>Euteleostomi</taxon>
        <taxon>Mammalia</taxon>
        <taxon>Eutheria</taxon>
        <taxon>Euarchontoglires</taxon>
        <taxon>Primates</taxon>
        <taxon>Haplorrhini</taxon>
        <taxon>Catarrhini</taxon>
        <taxon>Hominidae</taxon>
        <taxon>Homo</taxon>
    </lineage>
</organism>
<name>KCNQ3_HUMAN</name>
<sequence>MGLKARRAAGAAGGGGDGGGGGGGAANPAGGDAAAAGDEERKVGLAPGDVEQVTLALGAGADKDGTLLLEGGGRDEGQRRTPQGIGLLAKTPLSRPVKRNNAKYRRIQTLIYDALERPRGWALLYHALVFLIVLGCLILAVLTTFKEYETVSGDWLLLLETFAIFIFGAEFALRIWAAGCCCRYKGWRGRLKFARKPLCMLDIFVLIASVPVVAVGNQGNVLATSLRSLRFLQILRMLRMDRRGGTWKLLGSAICAHSKELITAWYIGFLTLILSSFLVYLVEKDVPEVDAQGEEMKEEFETYADALWWGLITLATIGYGDKTPKTWEGRLIAATFSLIGVSFFALPAGILGSGLALKVQEQHRQKHFEKRRKPAAELIQAAWRYYATNPNRIDLVATWRFYESVVSFPFFRKEQLEAASSQKLGLLDRVRLSNPRGSNTKGKLFTPLNVDAIEESPSKEPKPVGLNNKERFRTAFRMKAYAFWQSSEDAGTGDPMAEDRGYGNDFPIEDMIPTLKAAIRAVRILQFRLYKKKFKETLRPYDVKDVIEQYSAGHLDMLSRIKYLQTRIDMIFTPGPPSTPKHKKSQKGSAFTFPSQQSPRNEPYVARPSTSEIEDQSMMGKFVKVERQVQDMGKKLDFLVDMHMQHMERLQVQVTEYYPTKGTSSPAEAEKKEDNRYSDLKTIICNYSETGPPEPPYSFHQVTIDKVSPYGFFAHDPVNLPRGGPSSGKVQATPPSSATTYVERPTVLPILTLLDSRVSCHSQADLQGPYSDRISPRQRRSITRDSDTPLSLMSVNHEELERSPSGFSISQDRDDYVFGPNGGSSWMREKRYLAEGETDTDTDPFTPSGSMPLSSTGDGISDSVWTPSNKPI</sequence>
<keyword id="KW-0002">3D-structure</keyword>
<keyword id="KW-0025">Alternative splicing</keyword>
<keyword id="KW-1003">Cell membrane</keyword>
<keyword id="KW-0225">Disease variant</keyword>
<keyword id="KW-0887">Epilepsy</keyword>
<keyword id="KW-0407">Ion channel</keyword>
<keyword id="KW-0406">Ion transport</keyword>
<keyword id="KW-0472">Membrane</keyword>
<keyword id="KW-0597">Phosphoprotein</keyword>
<keyword id="KW-0630">Potassium</keyword>
<keyword id="KW-0631">Potassium channel</keyword>
<keyword id="KW-0633">Potassium transport</keyword>
<keyword id="KW-1267">Proteomics identification</keyword>
<keyword id="KW-1185">Reference proteome</keyword>
<keyword id="KW-0812">Transmembrane</keyword>
<keyword id="KW-1133">Transmembrane helix</keyword>
<keyword id="KW-0813">Transport</keyword>
<keyword id="KW-0832">Ubl conjugation</keyword>
<keyword id="KW-0851">Voltage-gated channel</keyword>
<feature type="chain" id="PRO_0000054034" description="Potassium voltage-gated channel subfamily KQT member 3">
    <location>
        <begin position="1"/>
        <end position="872"/>
    </location>
</feature>
<feature type="topological domain" description="Cytoplasmic" evidence="26">
    <location>
        <begin position="1"/>
        <end position="120"/>
    </location>
</feature>
<feature type="transmembrane region" description="Helical; Name=Segment S1" evidence="2">
    <location>
        <begin position="121"/>
        <end position="143"/>
    </location>
</feature>
<feature type="topological domain" description="Extracellular" evidence="26">
    <location>
        <begin position="144"/>
        <end position="153"/>
    </location>
</feature>
<feature type="transmembrane region" description="Helical; Name=Segment S2" evidence="2">
    <location>
        <begin position="154"/>
        <end position="175"/>
    </location>
</feature>
<feature type="topological domain" description="Cytoplasmic" evidence="26">
    <location>
        <begin position="176"/>
        <end position="193"/>
    </location>
</feature>
<feature type="transmembrane region" description="Helical; Name=Segment S3" evidence="2">
    <location>
        <begin position="194"/>
        <end position="213"/>
    </location>
</feature>
<feature type="topological domain" description="Extracellular" evidence="26">
    <location>
        <begin position="214"/>
        <end position="225"/>
    </location>
</feature>
<feature type="transmembrane region" description="Helical; Voltage-sensor; Name=Segment S4" evidence="2">
    <location>
        <begin position="226"/>
        <end position="244"/>
    </location>
</feature>
<feature type="topological domain" description="Cytoplasmic" evidence="26">
    <location>
        <begin position="245"/>
        <end position="256"/>
    </location>
</feature>
<feature type="transmembrane region" description="Helical; Name=Segment S5" evidence="2">
    <location>
        <begin position="257"/>
        <end position="282"/>
    </location>
</feature>
<feature type="topological domain" description="Extracellular" evidence="26">
    <location>
        <begin position="283"/>
        <end position="302"/>
    </location>
</feature>
<feature type="intramembrane region" description="Pore-forming; Name=Segment H5" evidence="2">
    <location>
        <begin position="303"/>
        <end position="315"/>
    </location>
</feature>
<feature type="topological domain" description="Extracellular" evidence="26">
    <location>
        <begin position="316"/>
        <end position="326"/>
    </location>
</feature>
<feature type="transmembrane region" description="Helical; Name=Segment S6" evidence="2">
    <location>
        <begin position="327"/>
        <end position="353"/>
    </location>
</feature>
<feature type="topological domain" description="Cytoplasmic" evidence="26">
    <location>
        <begin position="354"/>
        <end position="872"/>
    </location>
</feature>
<feature type="region of interest" description="Disordered" evidence="6">
    <location>
        <begin position="1"/>
        <end position="43"/>
    </location>
</feature>
<feature type="region of interest" description="Mediates interaction with calmodulin" evidence="21">
    <location>
        <begin position="356"/>
        <end position="537"/>
    </location>
</feature>
<feature type="region of interest" description="Disordered" evidence="6">
    <location>
        <begin position="575"/>
        <end position="611"/>
    </location>
</feature>
<feature type="region of interest" description="Disordered" evidence="6">
    <location>
        <begin position="764"/>
        <end position="872"/>
    </location>
</feature>
<feature type="short sequence motif" description="Selectivity filter" evidence="1">
    <location>
        <begin position="316"/>
        <end position="321"/>
    </location>
</feature>
<feature type="compositionally biased region" description="Gly residues" evidence="6">
    <location>
        <begin position="11"/>
        <end position="25"/>
    </location>
</feature>
<feature type="compositionally biased region" description="Low complexity" evidence="6">
    <location>
        <begin position="26"/>
        <end position="36"/>
    </location>
</feature>
<feature type="compositionally biased region" description="Polar residues" evidence="6">
    <location>
        <begin position="587"/>
        <end position="600"/>
    </location>
</feature>
<feature type="compositionally biased region" description="Polar residues" evidence="6">
    <location>
        <begin position="843"/>
        <end position="872"/>
    </location>
</feature>
<feature type="binding site" evidence="2">
    <location>
        <position position="243"/>
    </location>
    <ligand>
        <name>a 1,2-diacyl-sn-glycero-3-phospho-(1D-myo-inositol-4,5-bisphosphate)</name>
        <dbReference type="ChEBI" id="CHEBI:58456"/>
    </ligand>
</feature>
<feature type="binding site" evidence="2">
    <location>
        <position position="259"/>
    </location>
    <ligand>
        <name>a 1,2-diacyl-sn-glycero-3-phospho-(1D-myo-inositol-4,5-bisphosphate)</name>
        <dbReference type="ChEBI" id="CHEBI:58456"/>
    </ligand>
</feature>
<feature type="binding site" evidence="2">
    <location>
        <position position="366"/>
    </location>
    <ligand>
        <name>a 1,2-diacyl-sn-glycero-3-phospho-(1D-myo-inositol-4,5-bisphosphate)</name>
        <dbReference type="ChEBI" id="CHEBI:58456"/>
    </ligand>
</feature>
<feature type="modified residue" description="Phosphothreonine" evidence="3">
    <location>
        <position position="81"/>
    </location>
</feature>
<feature type="modified residue" description="Phosphothreonine" evidence="16">
    <location>
        <position position="246"/>
    </location>
</feature>
<feature type="splice variant" id="VSP_044906" description="In isoform 2." evidence="25">
    <original>MGLKARRAA</original>
    <variation>MKPAEHATM</variation>
    <location>
        <begin position="1"/>
        <end position="9"/>
    </location>
</feature>
<feature type="splice variant" id="VSP_044907" description="In isoform 2." evidence="25">
    <location>
        <begin position="10"/>
        <end position="129"/>
    </location>
</feature>
<feature type="sequence variant" id="VAR_026994" description="In BFNS2; reduces the maximal heteromeric current by 40% with no alteration in voltage dependence of activation or deactivation kinetics; dbSNP:rs118192248." evidence="15">
    <original>D</original>
    <variation>G</variation>
    <location>
        <position position="305"/>
    </location>
</feature>
<feature type="sequence variant" id="VAR_010935" description="In BFNS2; dbSNP:rs118192249." evidence="10">
    <original>W</original>
    <variation>R</variation>
    <location>
        <position position="309"/>
    </location>
</feature>
<feature type="sequence variant" id="VAR_001546" description="In BFNS2; about 50% reduction of wild-type heteromeric current; ratio of 1:1; or 20%; ratio of 1:1:2; dbSNP:rs118192250." evidence="15 23 24">
    <original>G</original>
    <variation>V</variation>
    <location>
        <position position="310"/>
    </location>
</feature>
<feature type="sequence variant" id="VAR_078681" description="In BFNS2; uncertain significance; dbSNP:rs2130128165." evidence="19">
    <original>G</original>
    <variation>V</variation>
    <location>
        <position position="340"/>
    </location>
</feature>
<feature type="sequence variant" id="VAR_053859" description="In dbSNP:rs2303995.">
    <original>E</original>
    <variation>G</variation>
    <location>
        <position position="414"/>
    </location>
</feature>
<feature type="sequence variant" id="VAR_026995" description="Has no statistically significant effect on the current or biophysical properties of the heteromeric channel; dbSNP:rs118192252." evidence="15">
    <original>N</original>
    <variation>S</variation>
    <location>
        <position position="468"/>
    </location>
</feature>
<feature type="sequence variant" id="VAR_072741" description="Rare variant; found in a patient with rolandic epilepsy and additional features such as mild developmental delay and abnormal behavior; uncertain significance; dbSNP:rs74582884." evidence="17">
    <original>P</original>
    <variation>S</variation>
    <location>
        <position position="574"/>
    </location>
</feature>
<feature type="sequence variant" id="VAR_078682" description="Found in patients with benign familial infantile seizures; uncertain significance; dbSNP:rs138852641." evidence="18">
    <original>R</original>
    <variation>C</variation>
    <location>
        <position position="780"/>
    </location>
</feature>
<feature type="mutagenesis site" description="No effect on current or expression." evidence="16">
    <original>T</original>
    <variation>A</variation>
    <location>
        <position position="246"/>
    </location>
</feature>
<feature type="mutagenesis site" description="Abolishes currents without reducing channel protein expression." evidence="16">
    <original>T</original>
    <variation>D</variation>
    <location>
        <position position="246"/>
    </location>
</feature>
<feature type="mutagenesis site" description="&gt;50% Reduction of wt heteromeric current; ratio of 1:1 and 1:1:2." evidence="24">
    <original>G</original>
    <variation>S</variation>
    <location>
        <position position="318"/>
    </location>
</feature>
<feature type="sequence conflict" description="In Ref. 5; AAI28577." evidence="26" ref="5">
    <original>D</original>
    <variation>N</variation>
    <location>
        <position position="62"/>
    </location>
</feature>
<feature type="sequence conflict" description="In Ref. 3; BAG58996." evidence="26" ref="3">
    <original>Q</original>
    <variation>L</variation>
    <location>
        <position position="233"/>
    </location>
</feature>
<feature type="helix" evidence="30">
    <location>
        <begin position="363"/>
        <end position="386"/>
    </location>
</feature>
<feature type="helix" evidence="30">
    <location>
        <begin position="397"/>
        <end position="403"/>
    </location>
</feature>
<reference key="1">
    <citation type="journal article" date="1998" name="Nature">
        <title>Moderate loss of function of cyclic-AMP-modulated KCNQ2/KCNQ3 K+ channels causes epilepsy.</title>
        <authorList>
            <person name="Schroeder B.C."/>
            <person name="Kubisch C."/>
            <person name="Stein V."/>
            <person name="Jentsch T.J."/>
        </authorList>
    </citation>
    <scope>NUCLEOTIDE SEQUENCE [GENOMIC DNA]</scope>
    <scope>CHARACTERIZATION OF VARIANT BFNS2 VAL-310</scope>
    <scope>MUTAGENESIS OF GLY-318</scope>
    <scope>FUNCTION</scope>
    <source>
        <tissue>Brain</tissue>
    </source>
</reference>
<reference key="2">
    <citation type="journal article" date="1998" name="J. Biol. Chem.">
        <title>Functional expression of two KvLQT1-related potassium channels responsible for an inherited idiopathic epilepsy.</title>
        <authorList>
            <person name="Yang W.-P."/>
            <person name="Levesque P.C."/>
            <person name="Little W.A."/>
            <person name="Conder M.L."/>
            <person name="Ramakrishnan P."/>
            <person name="Neubauer M.G."/>
            <person name="Blanar M.A."/>
        </authorList>
    </citation>
    <scope>NUCLEOTIDE SEQUENCE [MRNA] (ISOFORM 1)</scope>
    <scope>CHARACTERIZATION</scope>
    <source>
        <tissue>Brain</tissue>
        <tissue>Fetal brain</tissue>
    </source>
</reference>
<reference key="3">
    <citation type="journal article" date="2004" name="Nat. Genet.">
        <title>Complete sequencing and characterization of 21,243 full-length human cDNAs.</title>
        <authorList>
            <person name="Ota T."/>
            <person name="Suzuki Y."/>
            <person name="Nishikawa T."/>
            <person name="Otsuki T."/>
            <person name="Sugiyama T."/>
            <person name="Irie R."/>
            <person name="Wakamatsu A."/>
            <person name="Hayashi K."/>
            <person name="Sato H."/>
            <person name="Nagai K."/>
            <person name="Kimura K."/>
            <person name="Makita H."/>
            <person name="Sekine M."/>
            <person name="Obayashi M."/>
            <person name="Nishi T."/>
            <person name="Shibahara T."/>
            <person name="Tanaka T."/>
            <person name="Ishii S."/>
            <person name="Yamamoto J."/>
            <person name="Saito K."/>
            <person name="Kawai Y."/>
            <person name="Isono Y."/>
            <person name="Nakamura Y."/>
            <person name="Nagahari K."/>
            <person name="Murakami K."/>
            <person name="Yasuda T."/>
            <person name="Iwayanagi T."/>
            <person name="Wagatsuma M."/>
            <person name="Shiratori A."/>
            <person name="Sudo H."/>
            <person name="Hosoiri T."/>
            <person name="Kaku Y."/>
            <person name="Kodaira H."/>
            <person name="Kondo H."/>
            <person name="Sugawara M."/>
            <person name="Takahashi M."/>
            <person name="Kanda K."/>
            <person name="Yokoi T."/>
            <person name="Furuya T."/>
            <person name="Kikkawa E."/>
            <person name="Omura Y."/>
            <person name="Abe K."/>
            <person name="Kamihara K."/>
            <person name="Katsuta N."/>
            <person name="Sato K."/>
            <person name="Tanikawa M."/>
            <person name="Yamazaki M."/>
            <person name="Ninomiya K."/>
            <person name="Ishibashi T."/>
            <person name="Yamashita H."/>
            <person name="Murakawa K."/>
            <person name="Fujimori K."/>
            <person name="Tanai H."/>
            <person name="Kimata M."/>
            <person name="Watanabe M."/>
            <person name="Hiraoka S."/>
            <person name="Chiba Y."/>
            <person name="Ishida S."/>
            <person name="Ono Y."/>
            <person name="Takiguchi S."/>
            <person name="Watanabe S."/>
            <person name="Yosida M."/>
            <person name="Hotuta T."/>
            <person name="Kusano J."/>
            <person name="Kanehori K."/>
            <person name="Takahashi-Fujii A."/>
            <person name="Hara H."/>
            <person name="Tanase T.-O."/>
            <person name="Nomura Y."/>
            <person name="Togiya S."/>
            <person name="Komai F."/>
            <person name="Hara R."/>
            <person name="Takeuchi K."/>
            <person name="Arita M."/>
            <person name="Imose N."/>
            <person name="Musashino K."/>
            <person name="Yuuki H."/>
            <person name="Oshima A."/>
            <person name="Sasaki N."/>
            <person name="Aotsuka S."/>
            <person name="Yoshikawa Y."/>
            <person name="Matsunawa H."/>
            <person name="Ichihara T."/>
            <person name="Shiohata N."/>
            <person name="Sano S."/>
            <person name="Moriya S."/>
            <person name="Momiyama H."/>
            <person name="Satoh N."/>
            <person name="Takami S."/>
            <person name="Terashima Y."/>
            <person name="Suzuki O."/>
            <person name="Nakagawa S."/>
            <person name="Senoh A."/>
            <person name="Mizoguchi H."/>
            <person name="Goto Y."/>
            <person name="Shimizu F."/>
            <person name="Wakebe H."/>
            <person name="Hishigaki H."/>
            <person name="Watanabe T."/>
            <person name="Sugiyama A."/>
            <person name="Takemoto M."/>
            <person name="Kawakami B."/>
            <person name="Yamazaki M."/>
            <person name="Watanabe K."/>
            <person name="Kumagai A."/>
            <person name="Itakura S."/>
            <person name="Fukuzumi Y."/>
            <person name="Fujimori Y."/>
            <person name="Komiyama M."/>
            <person name="Tashiro H."/>
            <person name="Tanigami A."/>
            <person name="Fujiwara T."/>
            <person name="Ono T."/>
            <person name="Yamada K."/>
            <person name="Fujii Y."/>
            <person name="Ozaki K."/>
            <person name="Hirao M."/>
            <person name="Ohmori Y."/>
            <person name="Kawabata A."/>
            <person name="Hikiji T."/>
            <person name="Kobatake N."/>
            <person name="Inagaki H."/>
            <person name="Ikema Y."/>
            <person name="Okamoto S."/>
            <person name="Okitani R."/>
            <person name="Kawakami T."/>
            <person name="Noguchi S."/>
            <person name="Itoh T."/>
            <person name="Shigeta K."/>
            <person name="Senba T."/>
            <person name="Matsumura K."/>
            <person name="Nakajima Y."/>
            <person name="Mizuno T."/>
            <person name="Morinaga M."/>
            <person name="Sasaki M."/>
            <person name="Togashi T."/>
            <person name="Oyama M."/>
            <person name="Hata H."/>
            <person name="Watanabe M."/>
            <person name="Komatsu T."/>
            <person name="Mizushima-Sugano J."/>
            <person name="Satoh T."/>
            <person name="Shirai Y."/>
            <person name="Takahashi Y."/>
            <person name="Nakagawa K."/>
            <person name="Okumura K."/>
            <person name="Nagase T."/>
            <person name="Nomura N."/>
            <person name="Kikuchi H."/>
            <person name="Masuho Y."/>
            <person name="Yamashita R."/>
            <person name="Nakai K."/>
            <person name="Yada T."/>
            <person name="Nakamura Y."/>
            <person name="Ohara O."/>
            <person name="Isogai T."/>
            <person name="Sugano S."/>
        </authorList>
    </citation>
    <scope>NUCLEOTIDE SEQUENCE [LARGE SCALE MRNA] (ISOFORM 2)</scope>
    <source>
        <tissue>Thalamus</tissue>
    </source>
</reference>
<reference key="4">
    <citation type="journal article" date="2006" name="Nature">
        <title>DNA sequence and analysis of human chromosome 8.</title>
        <authorList>
            <person name="Nusbaum C."/>
            <person name="Mikkelsen T.S."/>
            <person name="Zody M.C."/>
            <person name="Asakawa S."/>
            <person name="Taudien S."/>
            <person name="Garber M."/>
            <person name="Kodira C.D."/>
            <person name="Schueler M.G."/>
            <person name="Shimizu A."/>
            <person name="Whittaker C.A."/>
            <person name="Chang J.L."/>
            <person name="Cuomo C.A."/>
            <person name="Dewar K."/>
            <person name="FitzGerald M.G."/>
            <person name="Yang X."/>
            <person name="Allen N.R."/>
            <person name="Anderson S."/>
            <person name="Asakawa T."/>
            <person name="Blechschmidt K."/>
            <person name="Bloom T."/>
            <person name="Borowsky M.L."/>
            <person name="Butler J."/>
            <person name="Cook A."/>
            <person name="Corum B."/>
            <person name="DeArellano K."/>
            <person name="DeCaprio D."/>
            <person name="Dooley K.T."/>
            <person name="Dorris L. III"/>
            <person name="Engels R."/>
            <person name="Gloeckner G."/>
            <person name="Hafez N."/>
            <person name="Hagopian D.S."/>
            <person name="Hall J.L."/>
            <person name="Ishikawa S.K."/>
            <person name="Jaffe D.B."/>
            <person name="Kamat A."/>
            <person name="Kudoh J."/>
            <person name="Lehmann R."/>
            <person name="Lokitsang T."/>
            <person name="Macdonald P."/>
            <person name="Major J.E."/>
            <person name="Matthews C.D."/>
            <person name="Mauceli E."/>
            <person name="Menzel U."/>
            <person name="Mihalev A.H."/>
            <person name="Minoshima S."/>
            <person name="Murayama Y."/>
            <person name="Naylor J.W."/>
            <person name="Nicol R."/>
            <person name="Nguyen C."/>
            <person name="O'Leary S.B."/>
            <person name="O'Neill K."/>
            <person name="Parker S.C.J."/>
            <person name="Polley A."/>
            <person name="Raymond C.K."/>
            <person name="Reichwald K."/>
            <person name="Rodriguez J."/>
            <person name="Sasaki T."/>
            <person name="Schilhabel M."/>
            <person name="Siddiqui R."/>
            <person name="Smith C.L."/>
            <person name="Sneddon T.P."/>
            <person name="Talamas J.A."/>
            <person name="Tenzin P."/>
            <person name="Topham K."/>
            <person name="Venkataraman V."/>
            <person name="Wen G."/>
            <person name="Yamazaki S."/>
            <person name="Young S.K."/>
            <person name="Zeng Q."/>
            <person name="Zimmer A.R."/>
            <person name="Rosenthal A."/>
            <person name="Birren B.W."/>
            <person name="Platzer M."/>
            <person name="Shimizu N."/>
            <person name="Lander E.S."/>
        </authorList>
    </citation>
    <scope>NUCLEOTIDE SEQUENCE [LARGE SCALE GENOMIC DNA]</scope>
</reference>
<reference key="5">
    <citation type="journal article" date="2004" name="Genome Res.">
        <title>The status, quality, and expansion of the NIH full-length cDNA project: the Mammalian Gene Collection (MGC).</title>
        <authorList>
            <consortium name="The MGC Project Team"/>
        </authorList>
    </citation>
    <scope>NUCLEOTIDE SEQUENCE [LARGE SCALE MRNA] OF 1-7; 34-588 AND 601-872 (ISOFORM 1)</scope>
</reference>
<reference key="6">
    <citation type="journal article" date="1998" name="Nat. Genet.">
        <title>A pore mutation in a novel KQT-like potassium channel gene in an idiopathic epilepsy family.</title>
        <authorList>
            <person name="Charlier C."/>
            <person name="Singh N.A."/>
            <person name="Ryan S.G."/>
            <person name="Lewis T.B."/>
            <person name="Reus B.E."/>
            <person name="Leach R.J."/>
            <person name="Leppert M."/>
        </authorList>
    </citation>
    <scope>NUCLEOTIDE SEQUENCE [MRNA] OF 48-872 (ISOFORM 1)</scope>
    <scope>VARIANT BFNS2 VAL-310</scope>
    <source>
        <tissue>Brain</tissue>
    </source>
</reference>
<reference key="7">
    <citation type="journal article" date="1999" name="J. Neurosci.">
        <title>Two types of K(+) channel subunit, Erg1 and KCNQ2/3, contribute to the M-like current in a mammalian neuronal cell.</title>
        <authorList>
            <person name="Selyanko A.A."/>
            <person name="Hadley J.K."/>
            <person name="Wood I.C."/>
            <person name="Abogadie F.C."/>
            <person name="Delmas P."/>
            <person name="Buckley N.J."/>
            <person name="London B."/>
            <person name="Brown D.A."/>
        </authorList>
    </citation>
    <scope>INVOLVEMENT IN M-LIKE CURRENT</scope>
</reference>
<reference key="8">
    <citation type="journal article" date="2000" name="FEBS Lett.">
        <title>M-type KCNQ2-KCNQ3 potassium channels are modulated by the KCNE2 subunit.</title>
        <authorList>
            <person name="Tinel N."/>
            <person name="Diochot S."/>
            <person name="Lauritzen I."/>
            <person name="Barhanin J."/>
            <person name="Lazdunski M."/>
            <person name="Borsotto M."/>
        </authorList>
    </citation>
    <scope>ASSOCIATION WITH KCNE2</scope>
</reference>
<reference key="9">
    <citation type="journal article" date="2000" name="J. Biol. Chem.">
        <title>Surface expression and single channel properties of KCNQ2/KCNQ3, M-type K+ channels involved in epilepsy.</title>
        <authorList>
            <person name="Schwake M."/>
            <person name="Pusch M."/>
            <person name="Kharkovets T."/>
            <person name="Jentsch T.J."/>
        </authorList>
    </citation>
    <scope>SUBCELLULAR LOCATION</scope>
</reference>
<reference key="10">
    <citation type="journal article" date="2000" name="J. Physiol. (Lond.)">
        <title>Inhibition of KCNQ1-4 potassium channels expressed in mammalian cells via M1 muscarinic acetylcholine receptors.</title>
        <authorList>
            <person name="Selyanko A.A."/>
            <person name="Hadley J.K."/>
            <person name="Wood I.C."/>
            <person name="Abogadie F.C."/>
            <person name="Jentsch T.J."/>
            <person name="Brown D.A."/>
        </authorList>
    </citation>
    <scope>FUNCTION</scope>
    <scope>INHIBITION BY M1 MUSCARINIC RECEPTORS</scope>
</reference>
<reference key="11">
    <citation type="journal article" date="2000" name="Mol. Pharmacol.">
        <title>Modulation of KCNQ2/3 potassium channels by the novel anticonvulsant retigabine.</title>
        <authorList>
            <person name="Main M.J."/>
            <person name="Cryan J.E."/>
            <person name="Dupere J.R."/>
            <person name="Cox B."/>
            <person name="Clare J.J."/>
            <person name="Burbidge S.A."/>
        </authorList>
    </citation>
    <scope>ACTIVATION BY RETICABINE</scope>
    <scope>ACTIVITY REGULATION</scope>
</reference>
<reference key="12">
    <citation type="journal article" date="2000" name="Mol. Pharmacol.">
        <title>Retigabine, a novel anti-convulsant, enhances activation of KCNQ2/Q3 potassium channels.</title>
        <authorList>
            <person name="Wickenden A.D."/>
            <person name="Yu W."/>
            <person name="Zou A."/>
            <person name="Jegla T."/>
            <person name="Wagoner P.K."/>
        </authorList>
    </citation>
    <scope>ACTIVATION BY RETICABINE</scope>
    <scope>ACTIVITY REGULATION</scope>
</reference>
<reference key="13">
    <citation type="journal article" date="2000" name="Neurosci. Lett.">
        <title>The novel anticonvulsant retigabine activates M-currents in Chinese hamster ovary-cells transfected with human KCNQ2/3 subunits.</title>
        <authorList>
            <person name="Rundfeldt C."/>
            <person name="Netzer R."/>
        </authorList>
    </citation>
    <scope>ACTIVATION BY RETICABINE</scope>
    <scope>ACTIVITY REGULATION</scope>
</reference>
<reference key="14">
    <citation type="journal article" date="2001" name="Br. J. Pharmacol.">
        <title>Characterization of KCNQ5/Q3 potassium channels expressed in mammalian cells.</title>
        <authorList>
            <person name="Wickenden A.D."/>
            <person name="Zou A."/>
            <person name="Wagoner P.K."/>
            <person name="Jegla T."/>
        </authorList>
    </citation>
    <scope>FUNCTION</scope>
    <scope>SUBUNIT</scope>
    <scope>ACTIVATION BY RETICABINE</scope>
    <scope>ACTIVITY REGULATION</scope>
</reference>
<reference key="15">
    <citation type="journal article" date="2005" name="Proc. Natl. Acad. Sci. U.S.A.">
        <title>Identification by mass spectrometry and functional characterization of two phosphorylation sites of KCNQ2/KCNQ3 channels.</title>
        <authorList>
            <person name="Surti T.S."/>
            <person name="Huang L."/>
            <person name="Jan Y.N."/>
            <person name="Jan L.Y."/>
            <person name="Cooper E.C."/>
        </authorList>
    </citation>
    <scope>FUNCTION</scope>
    <scope>PHOSPHORYLATION AT THR-246</scope>
    <scope>MUTAGENESIS OF THR-246</scope>
</reference>
<reference key="16">
    <citation type="journal article" date="2016" name="J. Biol. Chem.">
        <title>Ubiquitin-specific Protease 36 (USP36) Controls Neuronal Precursor Cell-expressed Developmentally Down-regulated 4-2 (Nedd4-2) Actions over the Neurotrophin Receptor TrkA and Potassium Voltage-gated Channels 7.2/3 (Kv7.2/3).</title>
        <authorList>
            <person name="Anta B."/>
            <person name="Martin-Rodriguez C."/>
            <person name="Gomis-Perez C."/>
            <person name="Calvo L."/>
            <person name="Lopez-Benito S."/>
            <person name="Calderon-Garcia A.A."/>
            <person name="Vicente-Garcia C."/>
            <person name="Villarroel A."/>
            <person name="Arevalo J.C."/>
        </authorList>
    </citation>
    <scope>UBIQUITINATION BY NEDD4L</scope>
</reference>
<reference key="17">
    <citation type="journal article" date="2017" name="Biophys. J.">
        <title>SMIT1 Modifies KCNQ Channel Function and Pharmacology by Physical Interaction with the Pore.</title>
        <authorList>
            <person name="Manville R.W."/>
            <person name="Neverisky D.L."/>
            <person name="Abbott G.W."/>
        </authorList>
    </citation>
    <scope>FUNCTION</scope>
    <scope>TRANSPORTER ACTIVITY</scope>
</reference>
<reference evidence="29" key="18">
    <citation type="journal article" date="2016" name="Biochemistry">
        <title>Structural insights into the M-channel proximal C-terminus/calmodulin complex.</title>
        <authorList>
            <person name="Strulovich R."/>
            <person name="Tobelaim W.S."/>
            <person name="Attali B."/>
            <person name="Hirsch J.A."/>
        </authorList>
    </citation>
    <scope>X-RAY CRYSTALLOGRAPHY (2.00 ANGSTROMS) OF 354-409 IN COMPLEX WITH CALMODULIN</scope>
    <scope>FUNCTION</scope>
    <scope>SUBUNIT</scope>
    <scope>INTERACTION WITH CALMODULIN</scope>
    <scope>REGION</scope>
    <scope>DOMAIN</scope>
</reference>
<reference key="19">
    <citation type="journal article" date="2000" name="Ann. Neurol.">
        <title>A novel mutation of KCNQ3 (c.925T--&gt;C) in a Japanese family with benign familial neonatal convulsions.</title>
        <authorList>
            <person name="Hirose S."/>
            <person name="Zenri F."/>
            <person name="Akiyoshi H."/>
            <person name="Fukuma G."/>
            <person name="Iwata H."/>
            <person name="Inoue T."/>
            <person name="Yonetani M."/>
            <person name="Tsutsumi M."/>
            <person name="Muranaka H."/>
            <person name="Kurokawa T."/>
            <person name="Hanai T."/>
            <person name="Wada K."/>
            <person name="Kaneko S."/>
            <person name="Mitsudome A."/>
        </authorList>
    </citation>
    <scope>VARIANT BFNS2 ARG-309</scope>
</reference>
<reference key="20">
    <citation type="journal article" date="2003" name="Brain">
        <title>KCNQ2 and KCNQ3 potassium channel genes in benign familial neonatal convulsions: expansion of the functional and mutation spectrum.</title>
        <authorList>
            <consortium name="The BFNC physician consortium"/>
            <person name="Singh N.A."/>
            <person name="Westenskow P."/>
            <person name="Charlier C."/>
            <person name="Pappas C."/>
            <person name="Leslie J."/>
            <person name="Dillon J."/>
            <person name="Anderson V.E."/>
            <person name="Sanguinetti M.C."/>
            <person name="Leppert M.F."/>
        </authorList>
    </citation>
    <scope>VARIANTS BFNS2 GLY-305 AND VAL-310</scope>
    <scope>CHARACTERIZATION OF VARIANT BFNS2 GLY-305</scope>
    <scope>VARIANT SER-468</scope>
    <scope>CHARACTERIZATION OF VARIANT SER-468</scope>
    <scope>FUNCTION</scope>
</reference>
<reference key="21">
    <citation type="journal article" date="2012" name="Epilepsia">
        <title>Targeted next generation sequencing as a diagnostic tool in epileptic disorders.</title>
        <authorList>
            <person name="Lemke J.R."/>
            <person name="Riesch E."/>
            <person name="Scheurenbrand T."/>
            <person name="Schubach M."/>
            <person name="Wilhelm C."/>
            <person name="Steiner I."/>
            <person name="Hansen J."/>
            <person name="Courage C."/>
            <person name="Gallati S."/>
            <person name="Buerki S."/>
            <person name="Strozzi S."/>
            <person name="Simonetti B.G."/>
            <person name="Grunt S."/>
            <person name="Steinlin M."/>
            <person name="Alber M."/>
            <person name="Wolff M."/>
            <person name="Klopstock T."/>
            <person name="Prott E.C."/>
            <person name="Lorenz R."/>
            <person name="Spaich C."/>
            <person name="Rona S."/>
            <person name="Lakshminarasimhan M."/>
            <person name="Kroell J."/>
            <person name="Dorn T."/>
            <person name="Kraemer G."/>
            <person name="Synofzik M."/>
            <person name="Becker F."/>
            <person name="Weber Y.G."/>
            <person name="Lerche H."/>
            <person name="Boehm D."/>
            <person name="Biskup S."/>
        </authorList>
    </citation>
    <scope>VARIANT SER-574</scope>
</reference>
<reference key="22">
    <citation type="journal article" date="2013" name="Epilepsia">
        <title>Genetic testing in benign familial epilepsies of the first year of life: clinical and diagnostic significance.</title>
        <authorList>
            <person name="Zara F."/>
            <person name="Specchio N."/>
            <person name="Striano P."/>
            <person name="Robbiano A."/>
            <person name="Gennaro E."/>
            <person name="Paravidino R."/>
            <person name="Vanni N."/>
            <person name="Beccaria F."/>
            <person name="Capovilla G."/>
            <person name="Bianchi A."/>
            <person name="Caffi L."/>
            <person name="Cardilli V."/>
            <person name="Darra F."/>
            <person name="Bernardina B.D."/>
            <person name="Fusco L."/>
            <person name="Gaggero R."/>
            <person name="Giordano L."/>
            <person name="Guerrini R."/>
            <person name="Incorpora G."/>
            <person name="Mastrangelo M."/>
            <person name="Spaccini L."/>
            <person name="Laverda A.M."/>
            <person name="Vecchi M."/>
            <person name="Vanadia F."/>
            <person name="Veggiotti P."/>
            <person name="Viri M."/>
            <person name="Occhi G."/>
            <person name="Budetta M."/>
            <person name="Taglialatela M."/>
            <person name="Coviello D.A."/>
            <person name="Vigevano F."/>
            <person name="Minetti C."/>
        </authorList>
    </citation>
    <scope>VARIANT CYS-780</scope>
</reference>
<reference key="23">
    <citation type="journal article" date="2015" name="Epilepsia">
        <title>Familial neonatal seizures in 36 families: Clinical and genetic features correlate with outcome.</title>
        <authorList>
            <person name="Grinton B.E."/>
            <person name="Heron S.E."/>
            <person name="Pelekanos J.T."/>
            <person name="Zuberi S.M."/>
            <person name="Kivity S."/>
            <person name="Afawi Z."/>
            <person name="Williams T.C."/>
            <person name="Casalaz D.M."/>
            <person name="Yendle S."/>
            <person name="Linder I."/>
            <person name="Lev D."/>
            <person name="Lerman-Sagie T."/>
            <person name="Malone S."/>
            <person name="Bassan H."/>
            <person name="Goldberg-Stern H."/>
            <person name="Stanley T."/>
            <person name="Hayman M."/>
            <person name="Calvert S."/>
            <person name="Korczyn A.D."/>
            <person name="Shevell M."/>
            <person name="Scheffer I.E."/>
            <person name="Mulley J.C."/>
            <person name="Berkovic S.F."/>
        </authorList>
    </citation>
    <scope>VARIANT BFNS2 VAL-340</scope>
</reference>
<dbReference type="EMBL" id="AF071491">
    <property type="protein sequence ID" value="AAC96101.1"/>
    <property type="molecule type" value="Genomic_DNA"/>
</dbReference>
<dbReference type="EMBL" id="AF071478">
    <property type="protein sequence ID" value="AAC96101.1"/>
    <property type="status" value="JOINED"/>
    <property type="molecule type" value="Genomic_DNA"/>
</dbReference>
<dbReference type="EMBL" id="AF071479">
    <property type="protein sequence ID" value="AAC96101.1"/>
    <property type="status" value="JOINED"/>
    <property type="molecule type" value="Genomic_DNA"/>
</dbReference>
<dbReference type="EMBL" id="AF071480">
    <property type="protein sequence ID" value="AAC96101.1"/>
    <property type="status" value="JOINED"/>
    <property type="molecule type" value="Genomic_DNA"/>
</dbReference>
<dbReference type="EMBL" id="AF071481">
    <property type="protein sequence ID" value="AAC96101.1"/>
    <property type="status" value="JOINED"/>
    <property type="molecule type" value="Genomic_DNA"/>
</dbReference>
<dbReference type="EMBL" id="AF071482">
    <property type="protein sequence ID" value="AAC96101.1"/>
    <property type="status" value="JOINED"/>
    <property type="molecule type" value="Genomic_DNA"/>
</dbReference>
<dbReference type="EMBL" id="AF071483">
    <property type="protein sequence ID" value="AAC96101.1"/>
    <property type="status" value="JOINED"/>
    <property type="molecule type" value="Genomic_DNA"/>
</dbReference>
<dbReference type="EMBL" id="AF071484">
    <property type="protein sequence ID" value="AAC96101.1"/>
    <property type="status" value="JOINED"/>
    <property type="molecule type" value="Genomic_DNA"/>
</dbReference>
<dbReference type="EMBL" id="AF071485">
    <property type="protein sequence ID" value="AAC96101.1"/>
    <property type="status" value="JOINED"/>
    <property type="molecule type" value="Genomic_DNA"/>
</dbReference>
<dbReference type="EMBL" id="AF071486">
    <property type="protein sequence ID" value="AAC96101.1"/>
    <property type="status" value="JOINED"/>
    <property type="molecule type" value="Genomic_DNA"/>
</dbReference>
<dbReference type="EMBL" id="AF071487">
    <property type="protein sequence ID" value="AAC96101.1"/>
    <property type="status" value="JOINED"/>
    <property type="molecule type" value="Genomic_DNA"/>
</dbReference>
<dbReference type="EMBL" id="AF071488">
    <property type="protein sequence ID" value="AAC96101.1"/>
    <property type="status" value="JOINED"/>
    <property type="molecule type" value="Genomic_DNA"/>
</dbReference>
<dbReference type="EMBL" id="AF071489">
    <property type="protein sequence ID" value="AAC96101.1"/>
    <property type="status" value="JOINED"/>
    <property type="molecule type" value="Genomic_DNA"/>
</dbReference>
<dbReference type="EMBL" id="AF071490">
    <property type="protein sequence ID" value="AAC96101.1"/>
    <property type="status" value="JOINED"/>
    <property type="molecule type" value="Genomic_DNA"/>
</dbReference>
<dbReference type="EMBL" id="AK296293">
    <property type="protein sequence ID" value="BAG58996.1"/>
    <property type="molecule type" value="mRNA"/>
</dbReference>
<dbReference type="EMBL" id="AC018540">
    <property type="status" value="NOT_ANNOTATED_CDS"/>
    <property type="molecule type" value="Genomic_DNA"/>
</dbReference>
<dbReference type="EMBL" id="AC123776">
    <property type="status" value="NOT_ANNOTATED_CDS"/>
    <property type="molecule type" value="Genomic_DNA"/>
</dbReference>
<dbReference type="EMBL" id="AC131042">
    <property type="status" value="NOT_ANNOTATED_CDS"/>
    <property type="molecule type" value="Genomic_DNA"/>
</dbReference>
<dbReference type="EMBL" id="AC136373">
    <property type="status" value="NOT_ANNOTATED_CDS"/>
    <property type="molecule type" value="Genomic_DNA"/>
</dbReference>
<dbReference type="EMBL" id="BC128576">
    <property type="protein sequence ID" value="AAI28577.1"/>
    <property type="status" value="ALT_SEQ"/>
    <property type="molecule type" value="mRNA"/>
</dbReference>
<dbReference type="EMBL" id="AF033347">
    <property type="protein sequence ID" value="AAB97314.1"/>
    <property type="molecule type" value="mRNA"/>
</dbReference>
<dbReference type="CCDS" id="CCDS34943.1">
    <molecule id="O43525-1"/>
</dbReference>
<dbReference type="CCDS" id="CCDS56554.1">
    <molecule id="O43525-2"/>
</dbReference>
<dbReference type="RefSeq" id="NP_001191753.1">
    <molecule id="O43525-2"/>
    <property type="nucleotide sequence ID" value="NM_001204824.2"/>
</dbReference>
<dbReference type="RefSeq" id="NP_004510.1">
    <molecule id="O43525-1"/>
    <property type="nucleotide sequence ID" value="NM_004519.4"/>
</dbReference>
<dbReference type="PDB" id="5J03">
    <property type="method" value="X-ray"/>
    <property type="resolution" value="2.00 A"/>
    <property type="chains" value="A=354-409"/>
</dbReference>
<dbReference type="PDBsum" id="5J03"/>
<dbReference type="SMR" id="O43525"/>
<dbReference type="BioGRID" id="109987">
    <property type="interactions" value="16"/>
</dbReference>
<dbReference type="CORUM" id="O43525"/>
<dbReference type="FunCoup" id="O43525">
    <property type="interactions" value="275"/>
</dbReference>
<dbReference type="IntAct" id="O43525">
    <property type="interactions" value="7"/>
</dbReference>
<dbReference type="STRING" id="9606.ENSP00000373648"/>
<dbReference type="BindingDB" id="O43525"/>
<dbReference type="ChEMBL" id="CHEMBL2684"/>
<dbReference type="DrugBank" id="DB00321">
    <property type="generic name" value="Amitriptyline"/>
</dbReference>
<dbReference type="DrugBank" id="DB00586">
    <property type="generic name" value="Diclofenac"/>
</dbReference>
<dbReference type="DrugBank" id="DB00228">
    <property type="generic name" value="Enflurane"/>
</dbReference>
<dbReference type="DrugBank" id="DB04953">
    <property type="generic name" value="Ezogabine"/>
</dbReference>
<dbReference type="DrugBank" id="DB00996">
    <property type="generic name" value="Gabapentin"/>
</dbReference>
<dbReference type="DrugBank" id="DB06089">
    <property type="generic name" value="ICA-105665"/>
</dbReference>
<dbReference type="DrugBank" id="DB13806">
    <property type="generic name" value="Linopirdine"/>
</dbReference>
<dbReference type="DrugBank" id="DB00939">
    <property type="generic name" value="Meclofenamic acid"/>
</dbReference>
<dbReference type="DrugBank" id="DB01110">
    <property type="generic name" value="Miconazole"/>
</dbReference>
<dbReference type="DrugBank" id="DB01069">
    <property type="generic name" value="Promethazine"/>
</dbReference>
<dbReference type="DrugBank" id="DB08837">
    <property type="generic name" value="Tetraethylammonium"/>
</dbReference>
<dbReference type="DrugCentral" id="O43525"/>
<dbReference type="GuidetoPHARMACOLOGY" id="562"/>
<dbReference type="TCDB" id="1.A.1.15.3">
    <property type="family name" value="the voltage-gated ion channel (vic) superfamily"/>
</dbReference>
<dbReference type="GlyCosmos" id="O43525">
    <property type="glycosylation" value="1 site, 1 glycan"/>
</dbReference>
<dbReference type="GlyGen" id="O43525">
    <property type="glycosylation" value="1 site, 1 O-linked glycan (1 site)"/>
</dbReference>
<dbReference type="iPTMnet" id="O43525"/>
<dbReference type="PhosphoSitePlus" id="O43525"/>
<dbReference type="BioMuta" id="KCNQ3"/>
<dbReference type="jPOST" id="O43525"/>
<dbReference type="MassIVE" id="O43525"/>
<dbReference type="PaxDb" id="9606-ENSP00000373648"/>
<dbReference type="PeptideAtlas" id="O43525"/>
<dbReference type="ProteomicsDB" id="17526"/>
<dbReference type="ProteomicsDB" id="49030">
    <molecule id="O43525-1"/>
</dbReference>
<dbReference type="Antibodypedia" id="14124">
    <property type="antibodies" value="151 antibodies from 24 providers"/>
</dbReference>
<dbReference type="DNASU" id="3786"/>
<dbReference type="Ensembl" id="ENST00000388996.10">
    <molecule id="O43525-1"/>
    <property type="protein sequence ID" value="ENSP00000373648.3"/>
    <property type="gene ID" value="ENSG00000184156.18"/>
</dbReference>
<dbReference type="Ensembl" id="ENST00000521134.6">
    <molecule id="O43525-2"/>
    <property type="protein sequence ID" value="ENSP00000429799.1"/>
    <property type="gene ID" value="ENSG00000184156.18"/>
</dbReference>
<dbReference type="GeneID" id="3786"/>
<dbReference type="KEGG" id="hsa:3786"/>
<dbReference type="MANE-Select" id="ENST00000388996.10">
    <property type="protein sequence ID" value="ENSP00000373648.3"/>
    <property type="RefSeq nucleotide sequence ID" value="NM_004519.4"/>
    <property type="RefSeq protein sequence ID" value="NP_004510.1"/>
</dbReference>
<dbReference type="UCSC" id="uc003yti.4">
    <molecule id="O43525-1"/>
    <property type="organism name" value="human"/>
</dbReference>
<dbReference type="AGR" id="HGNC:6297"/>
<dbReference type="CTD" id="3786"/>
<dbReference type="DisGeNET" id="3786"/>
<dbReference type="GeneCards" id="KCNQ3"/>
<dbReference type="GeneReviews" id="KCNQ3"/>
<dbReference type="HGNC" id="HGNC:6297">
    <property type="gene designation" value="KCNQ3"/>
</dbReference>
<dbReference type="HPA" id="ENSG00000184156">
    <property type="expression patterns" value="Tissue enriched (brain)"/>
</dbReference>
<dbReference type="MalaCards" id="KCNQ3"/>
<dbReference type="MIM" id="121201">
    <property type="type" value="phenotype"/>
</dbReference>
<dbReference type="MIM" id="602232">
    <property type="type" value="gene"/>
</dbReference>
<dbReference type="neXtProt" id="NX_O43525"/>
<dbReference type="OpenTargets" id="ENSG00000184156"/>
<dbReference type="Orphanet" id="307">
    <property type="disease" value="Juvenile myoclonic epilepsy"/>
</dbReference>
<dbReference type="Orphanet" id="306">
    <property type="disease" value="Self-limited infantile epilepsy"/>
</dbReference>
<dbReference type="Orphanet" id="1949">
    <property type="disease" value="Self-limited neonatal epilepsy"/>
</dbReference>
<dbReference type="PharmGKB" id="PA30075"/>
<dbReference type="VEuPathDB" id="HostDB:ENSG00000184156"/>
<dbReference type="eggNOG" id="KOG1419">
    <property type="taxonomic scope" value="Eukaryota"/>
</dbReference>
<dbReference type="GeneTree" id="ENSGT00940000159760"/>
<dbReference type="InParanoid" id="O43525"/>
<dbReference type="OMA" id="QDRDDYM"/>
<dbReference type="OrthoDB" id="8879391at2759"/>
<dbReference type="PAN-GO" id="O43525">
    <property type="GO annotations" value="6 GO annotations based on evolutionary models"/>
</dbReference>
<dbReference type="PhylomeDB" id="O43525"/>
<dbReference type="TreeFam" id="TF315186"/>
<dbReference type="PathwayCommons" id="O43525"/>
<dbReference type="Reactome" id="R-HSA-1296072">
    <property type="pathway name" value="Voltage gated Potassium channels"/>
</dbReference>
<dbReference type="Reactome" id="R-HSA-445095">
    <property type="pathway name" value="Interaction between L1 and Ankyrins"/>
</dbReference>
<dbReference type="SignaLink" id="O43525"/>
<dbReference type="SIGNOR" id="O43525"/>
<dbReference type="BioGRID-ORCS" id="3786">
    <property type="hits" value="7 hits in 1151 CRISPR screens"/>
</dbReference>
<dbReference type="ChiTaRS" id="KCNQ3">
    <property type="organism name" value="human"/>
</dbReference>
<dbReference type="GeneWiki" id="KvLQT3"/>
<dbReference type="GenomeRNAi" id="3786"/>
<dbReference type="Pharos" id="O43525">
    <property type="development level" value="Tclin"/>
</dbReference>
<dbReference type="PRO" id="PR:O43525"/>
<dbReference type="Proteomes" id="UP000005640">
    <property type="component" value="Chromosome 8"/>
</dbReference>
<dbReference type="RNAct" id="O43525">
    <property type="molecule type" value="protein"/>
</dbReference>
<dbReference type="Bgee" id="ENSG00000184156">
    <property type="expression patterns" value="Expressed in ganglionic eminence and 133 other cell types or tissues"/>
</dbReference>
<dbReference type="ExpressionAtlas" id="O43525">
    <property type="expression patterns" value="baseline and differential"/>
</dbReference>
<dbReference type="GO" id="GO:0043194">
    <property type="term" value="C:axon initial segment"/>
    <property type="evidence" value="ECO:0000250"/>
    <property type="project" value="BHF-UCL"/>
</dbReference>
<dbReference type="GO" id="GO:0009986">
    <property type="term" value="C:cell surface"/>
    <property type="evidence" value="ECO:0007669"/>
    <property type="project" value="Ensembl"/>
</dbReference>
<dbReference type="GO" id="GO:0005739">
    <property type="term" value="C:mitochondrion"/>
    <property type="evidence" value="ECO:0007669"/>
    <property type="project" value="GOC"/>
</dbReference>
<dbReference type="GO" id="GO:0033268">
    <property type="term" value="C:node of Ranvier"/>
    <property type="evidence" value="ECO:0000250"/>
    <property type="project" value="BHF-UCL"/>
</dbReference>
<dbReference type="GO" id="GO:0005886">
    <property type="term" value="C:plasma membrane"/>
    <property type="evidence" value="ECO:0000314"/>
    <property type="project" value="UniProtKB"/>
</dbReference>
<dbReference type="GO" id="GO:0045202">
    <property type="term" value="C:synapse"/>
    <property type="evidence" value="ECO:0007669"/>
    <property type="project" value="GOC"/>
</dbReference>
<dbReference type="GO" id="GO:0008076">
    <property type="term" value="C:voltage-gated potassium channel complex"/>
    <property type="evidence" value="ECO:0000314"/>
    <property type="project" value="UniProtKB"/>
</dbReference>
<dbReference type="GO" id="GO:0005516">
    <property type="term" value="F:calmodulin binding"/>
    <property type="evidence" value="ECO:0000314"/>
    <property type="project" value="UniProtKB"/>
</dbReference>
<dbReference type="GO" id="GO:0022843">
    <property type="term" value="F:voltage-gated monoatomic cation channel activity"/>
    <property type="evidence" value="ECO:0000314"/>
    <property type="project" value="UniProtKB"/>
</dbReference>
<dbReference type="GO" id="GO:0005249">
    <property type="term" value="F:voltage-gated potassium channel activity"/>
    <property type="evidence" value="ECO:0000314"/>
    <property type="project" value="UniProtKB"/>
</dbReference>
<dbReference type="GO" id="GO:0099610">
    <property type="term" value="P:action potential initiation"/>
    <property type="evidence" value="ECO:0007669"/>
    <property type="project" value="Ensembl"/>
</dbReference>
<dbReference type="GO" id="GO:0097314">
    <property type="term" value="P:apoptosome assembly"/>
    <property type="evidence" value="ECO:0007669"/>
    <property type="project" value="Ensembl"/>
</dbReference>
<dbReference type="GO" id="GO:0071277">
    <property type="term" value="P:cellular response to calcium ion"/>
    <property type="evidence" value="ECO:0007669"/>
    <property type="project" value="Ensembl"/>
</dbReference>
<dbReference type="GO" id="GO:0071466">
    <property type="term" value="P:cellular response to xenobiotic stimulus"/>
    <property type="evidence" value="ECO:0007669"/>
    <property type="project" value="Ensembl"/>
</dbReference>
<dbReference type="GO" id="GO:0007268">
    <property type="term" value="P:chemical synaptic transmission"/>
    <property type="evidence" value="ECO:0000304"/>
    <property type="project" value="ProtInc"/>
</dbReference>
<dbReference type="GO" id="GO:0006897">
    <property type="term" value="P:endocytosis"/>
    <property type="evidence" value="ECO:0007669"/>
    <property type="project" value="Ensembl"/>
</dbReference>
<dbReference type="GO" id="GO:0098976">
    <property type="term" value="P:excitatory chemical synaptic transmission"/>
    <property type="evidence" value="ECO:0007669"/>
    <property type="project" value="Ensembl"/>
</dbReference>
<dbReference type="GO" id="GO:0006887">
    <property type="term" value="P:exocytosis"/>
    <property type="evidence" value="ECO:0007669"/>
    <property type="project" value="Ensembl"/>
</dbReference>
<dbReference type="GO" id="GO:0010467">
    <property type="term" value="P:gene expression"/>
    <property type="evidence" value="ECO:0007669"/>
    <property type="project" value="Ensembl"/>
</dbReference>
<dbReference type="GO" id="GO:0098977">
    <property type="term" value="P:inhibitory chemical synaptic transmission"/>
    <property type="evidence" value="ECO:0007669"/>
    <property type="project" value="Ensembl"/>
</dbReference>
<dbReference type="GO" id="GO:0060081">
    <property type="term" value="P:membrane hyperpolarization"/>
    <property type="evidence" value="ECO:0007669"/>
    <property type="project" value="Ensembl"/>
</dbReference>
<dbReference type="GO" id="GO:0051882">
    <property type="term" value="P:mitochondrial depolarization"/>
    <property type="evidence" value="ECO:0007669"/>
    <property type="project" value="Ensembl"/>
</dbReference>
<dbReference type="GO" id="GO:0021675">
    <property type="term" value="P:nerve development"/>
    <property type="evidence" value="ECO:0007669"/>
    <property type="project" value="Ensembl"/>
</dbReference>
<dbReference type="GO" id="GO:0051402">
    <property type="term" value="P:neuron apoptotic process"/>
    <property type="evidence" value="ECO:0007669"/>
    <property type="project" value="Ensembl"/>
</dbReference>
<dbReference type="GO" id="GO:0016322">
    <property type="term" value="P:neuron remodeling"/>
    <property type="evidence" value="ECO:0007669"/>
    <property type="project" value="Ensembl"/>
</dbReference>
<dbReference type="GO" id="GO:0019228">
    <property type="term" value="P:neuronal action potential"/>
    <property type="evidence" value="ECO:0007669"/>
    <property type="project" value="Ensembl"/>
</dbReference>
<dbReference type="GO" id="GO:0071805">
    <property type="term" value="P:potassium ion transmembrane transport"/>
    <property type="evidence" value="ECO:0000314"/>
    <property type="project" value="UniProtKB"/>
</dbReference>
<dbReference type="GO" id="GO:0006606">
    <property type="term" value="P:protein import into nucleus"/>
    <property type="evidence" value="ECO:0007669"/>
    <property type="project" value="Ensembl"/>
</dbReference>
<dbReference type="GO" id="GO:0006605">
    <property type="term" value="P:protein targeting"/>
    <property type="evidence" value="ECO:0007669"/>
    <property type="project" value="Ensembl"/>
</dbReference>
<dbReference type="GO" id="GO:0036343">
    <property type="term" value="P:psychomotor behavior"/>
    <property type="evidence" value="ECO:0007669"/>
    <property type="project" value="Ensembl"/>
</dbReference>
<dbReference type="GO" id="GO:0099611">
    <property type="term" value="P:regulation of action potential firing threshold"/>
    <property type="evidence" value="ECO:0007669"/>
    <property type="project" value="Ensembl"/>
</dbReference>
<dbReference type="GO" id="GO:0048167">
    <property type="term" value="P:regulation of synaptic plasticity"/>
    <property type="evidence" value="ECO:0007669"/>
    <property type="project" value="Ensembl"/>
</dbReference>
<dbReference type="GO" id="GO:0010996">
    <property type="term" value="P:response to auditory stimulus"/>
    <property type="evidence" value="ECO:0007669"/>
    <property type="project" value="Ensembl"/>
</dbReference>
<dbReference type="GO" id="GO:0007605">
    <property type="term" value="P:sensory perception of sound"/>
    <property type="evidence" value="ECO:0007669"/>
    <property type="project" value="Ensembl"/>
</dbReference>
<dbReference type="GO" id="GO:1903701">
    <property type="term" value="P:substantia propria of cornea development"/>
    <property type="evidence" value="ECO:0007669"/>
    <property type="project" value="Ensembl"/>
</dbReference>
<dbReference type="FunFam" id="1.20.120.350:FF:000017">
    <property type="entry name" value="potassium voltage-gated channel subfamily KQT member 1"/>
    <property type="match status" value="1"/>
</dbReference>
<dbReference type="FunFam" id="1.10.287.70:FF:000016">
    <property type="entry name" value="Putative potassium voltage-gated channel subfamily KQT member 2"/>
    <property type="match status" value="1"/>
</dbReference>
<dbReference type="Gene3D" id="1.10.287.70">
    <property type="match status" value="1"/>
</dbReference>
<dbReference type="Gene3D" id="6.10.140.1910">
    <property type="match status" value="2"/>
</dbReference>
<dbReference type="InterPro" id="IPR020969">
    <property type="entry name" value="Ankyrin-G_BS"/>
</dbReference>
<dbReference type="InterPro" id="IPR005821">
    <property type="entry name" value="Ion_trans_dom"/>
</dbReference>
<dbReference type="InterPro" id="IPR003937">
    <property type="entry name" value="K_chnl_volt-dep_KCNQ"/>
</dbReference>
<dbReference type="InterPro" id="IPR003948">
    <property type="entry name" value="K_chnl_volt-dep_KCNQ3"/>
</dbReference>
<dbReference type="InterPro" id="IPR013821">
    <property type="entry name" value="K_chnl_volt-dep_KCNQ_C"/>
</dbReference>
<dbReference type="PANTHER" id="PTHR47735:SF11">
    <property type="entry name" value="POTASSIUM VOLTAGE-GATED CHANNEL SUBFAMILY KQT MEMBER 3"/>
    <property type="match status" value="1"/>
</dbReference>
<dbReference type="PANTHER" id="PTHR47735">
    <property type="entry name" value="POTASSIUM VOLTAGE-GATED CHANNEL SUBFAMILY KQT MEMBER 4"/>
    <property type="match status" value="1"/>
</dbReference>
<dbReference type="Pfam" id="PF00520">
    <property type="entry name" value="Ion_trans"/>
    <property type="match status" value="1"/>
</dbReference>
<dbReference type="Pfam" id="PF03520">
    <property type="entry name" value="KCNQ_channel"/>
    <property type="match status" value="1"/>
</dbReference>
<dbReference type="Pfam" id="PF11956">
    <property type="entry name" value="KCNQC3-Ank-G_bd"/>
    <property type="match status" value="1"/>
</dbReference>
<dbReference type="PRINTS" id="PR00169">
    <property type="entry name" value="KCHANNEL"/>
</dbReference>
<dbReference type="PRINTS" id="PR01462">
    <property type="entry name" value="KCNQ3CHANNEL"/>
</dbReference>
<dbReference type="PRINTS" id="PR01459">
    <property type="entry name" value="KCNQCHANNEL"/>
</dbReference>
<dbReference type="SUPFAM" id="SSF81324">
    <property type="entry name" value="Voltage-gated potassium channels"/>
    <property type="match status" value="1"/>
</dbReference>
<proteinExistence type="evidence at protein level"/>
<gene>
    <name evidence="28" type="primary">KCNQ3</name>
</gene>
<comment type="function">
    <text evidence="2 8 14 15 16 21 22 24">Pore-forming subunit of the voltage-gated potassium (Kv) M-channel which is responsible for the M-current, a key controller of neuronal excitability (PubMed:16319223, PubMed:27564677, PubMed:28793216, PubMed:9872318). M-channel is composed of pore-forming subunits KCNQ2 and KCNQ3 assembled as heterotetramers (PubMed:14534157, PubMed:16319223, PubMed:27564677, PubMed:9872318). The native M-current has a slowly activating and deactivating potassium conductance which plays a critical role in determining the subthreshold electrical excitability of neurons as well as the responsiveness to synaptic inputs (PubMed:14534157, PubMed:16319223, PubMed:28793216). M-channel is selectively permeable in vitro to other cations besides potassium, in decreasing order of affinity K(+) &gt; Rb(+) &gt; Cs(+) &gt; Na(+) (PubMed:28793216). M-channel association with SLC5A3/SMIT1 alters channel ion selectivity, increasing Na(+) and Cs(+) permeation relative to K(+) (PubMed:28793216). Suppressed by activation of M1 muscarinic acetylcholine receptors (PubMed:10713961). KCNQ3 also associates with KCNQ5 to form a functional channel in vitro and may also contribute to the M-current in brain (PubMed:11159685).</text>
</comment>
<comment type="catalytic activity">
    <reaction evidence="22">
        <text>K(+)(in) = K(+)(out)</text>
        <dbReference type="Rhea" id="RHEA:29463"/>
        <dbReference type="ChEBI" id="CHEBI:29103"/>
    </reaction>
</comment>
<comment type="catalytic activity">
    <reaction evidence="22">
        <text>Rb(+)(in) = Rb(+)(out)</text>
        <dbReference type="Rhea" id="RHEA:78547"/>
        <dbReference type="ChEBI" id="CHEBI:49847"/>
    </reaction>
</comment>
<comment type="catalytic activity">
    <reaction evidence="22">
        <text>Cs(+)(in) = Cs(+)(out)</text>
        <dbReference type="Rhea" id="RHEA:78555"/>
        <dbReference type="ChEBI" id="CHEBI:49547"/>
    </reaction>
</comment>
<comment type="catalytic activity">
    <reaction evidence="22">
        <text>Na(+)(in) = Na(+)(out)</text>
        <dbReference type="Rhea" id="RHEA:34963"/>
        <dbReference type="ChEBI" id="CHEBI:29101"/>
    </reaction>
</comment>
<comment type="activity regulation">
    <text evidence="2 3 7 11 12 14">Phosphatidylinositol-4,5-bisphosphate (PIP2) potentiates the activation of KCNQ channels by enhancing the electro-mechanical coupling of the voltage-sensing domain (VSD) and the pore-forming domain (PD) (By similarity). In the closed state of the channel, PIP2 is anchored at the S2-S3 loop; upon channel activation, PIP2 interacts with the S4-S5 linker and is involved in channel gating (By similarity). Calcium suppresses KCNQ2-KCNQ3 channel currents, with calcium-bound calmodulin inducing a change in channel configuration which leads to the reduction of channel affinity for PIP2 and subsequent current suppression (By similarity). M-channel is activated by the anticonvulsant retigabine (PubMed:10713399, PubMed:10908292, PubMed:10953053, PubMed:11159685).</text>
</comment>
<comment type="subunit">
    <text evidence="4 13 14 21 22">Heterotetramer with KCNQ2; forms heterotetrameric native M-channel responsible for the M-current (PubMed:27564677). Interacts with calmodulin; the interaction is calcium-independent, constitutive and participates in the proper assembly of a functional M-channel (PubMed:27564677). Heteromultimer with KCNQ5 (PubMed:11159685). May associate with KCNE2 (PubMed:11034315). Interacts with IQCJ-SCHIP1 (By similarity). Interacts (via the pore module) with SLC5A3/SMIT1; forms a coregulatory complex that alters ion selectivity, voltage dependence and gating kinetics of the channel (PubMed:28793216).</text>
</comment>
<comment type="subcellular location">
    <subcellularLocation>
        <location evidence="9">Cell membrane</location>
        <topology evidence="5">Multi-pass membrane protein</topology>
    </subcellularLocation>
</comment>
<comment type="alternative products">
    <event type="alternative splicing"/>
    <isoform>
        <id>O43525-1</id>
        <name>1</name>
        <sequence type="displayed"/>
    </isoform>
    <isoform>
        <id>O43525-2</id>
        <name>2</name>
        <sequence type="described" ref="VSP_044906 VSP_044907"/>
    </isoform>
</comment>
<comment type="tissue specificity">
    <text>Predominantly expressed in brain.</text>
</comment>
<comment type="domain">
    <text evidence="2">Each subunit contains six transmembrane segments (S1-S6) with S1-S4 forming one voltage sensing domain (VSD) and S5-S6 contributing to form one quarter of an interlocking pore-forming domain (PD).</text>
</comment>
<comment type="domain">
    <text evidence="2">The S4-S5 linker preferentially interacts with PIP2 in the open-state KCNQ2 channel, whereas the S2-S3 loop interacts with PIP2 in the closed state.</text>
</comment>
<comment type="domain">
    <text evidence="21">The intracellular C-terminal domain is bound constitutively by calmodulin (CaM) (PubMed:27564677). This domain plays key functions in channel tetramerization, trafficking, and gating (PubMed:27564677).</text>
</comment>
<comment type="PTM">
    <text evidence="20 27">KCNQ2/KCNQ3 are ubiquitinated by NEDD4L. Ubiquitination leads to protein degradation (Probable). Degradation induced by NEDD4L is inhibited by USP36 (PubMed:27445338).</text>
</comment>
<comment type="disease" evidence="10 15 19 23 24">
    <disease id="DI-00183">
        <name>Seizures, benign familial neonatal 2</name>
        <acronym>BFNS2</acronym>
        <description>A disorder characterized by clusters of seizures occurring in the first days of life. Most patients have spontaneous remission by 12 months of age and show normal psychomotor development. The disorder is distinguished from benign familial infantile seizures by an earlier age at onset.</description>
        <dbReference type="MIM" id="121201"/>
    </disease>
    <text>The disease is caused by variants affecting the gene represented in this entry.</text>
</comment>
<comment type="disease">
    <text evidence="17">Defects in KCNQ3 may be involved in epileptic disorders. These are characterized by paroxysmal transient disturbances of the electrical activity of the brain that may be manifested as episodic impairment or loss of consciousness, abnormal motor phenomena, psychic or sensory disturbances, or perturbation of the autonomic nervous system.</text>
</comment>
<comment type="similarity">
    <text evidence="26">Belongs to the potassium channel family. KQT (TC 1.A.1.15) subfamily. Kv7.3/KCNQ3 sub-subfamily.</text>
</comment>
<comment type="sequence caution" evidence="26">
    <conflict type="erroneous initiation">
        <sequence resource="EMBL-CDS" id="AAI28577"/>
    </conflict>
    <text>Extended N-terminus.</text>
</comment>
<comment type="sequence caution" evidence="26">
    <conflict type="miscellaneous discrepancy">
        <sequence resource="EMBL-CDS" id="AAI28577"/>
    </conflict>
    <text>Aberrant splicing.</text>
</comment>
<protein>
    <recommendedName>
        <fullName evidence="26">Potassium voltage-gated channel subfamily KQT member 3</fullName>
    </recommendedName>
    <alternativeName>
        <fullName>KQT-like 3</fullName>
    </alternativeName>
    <alternativeName>
        <fullName>Potassium channel subunit alpha KvLQT3</fullName>
    </alternativeName>
    <alternativeName>
        <fullName>Voltage-gated potassium channel subunit Kv7.3</fullName>
    </alternativeName>
</protein>
<evidence type="ECO:0000250" key="1"/>
<evidence type="ECO:0000250" key="2">
    <source>
        <dbReference type="UniProtKB" id="O43526"/>
    </source>
</evidence>
<evidence type="ECO:0000250" key="3">
    <source>
        <dbReference type="UniProtKB" id="O88944"/>
    </source>
</evidence>
<evidence type="ECO:0000250" key="4">
    <source>
        <dbReference type="UniProtKB" id="Q8K3F6"/>
    </source>
</evidence>
<evidence type="ECO:0000255" key="5"/>
<evidence type="ECO:0000256" key="6">
    <source>
        <dbReference type="SAM" id="MobiDB-lite"/>
    </source>
</evidence>
<evidence type="ECO:0000269" key="7">
    <source>
    </source>
</evidence>
<evidence type="ECO:0000269" key="8">
    <source>
    </source>
</evidence>
<evidence type="ECO:0000269" key="9">
    <source>
    </source>
</evidence>
<evidence type="ECO:0000269" key="10">
    <source>
    </source>
</evidence>
<evidence type="ECO:0000269" key="11">
    <source>
    </source>
</evidence>
<evidence type="ECO:0000269" key="12">
    <source>
    </source>
</evidence>
<evidence type="ECO:0000269" key="13">
    <source>
    </source>
</evidence>
<evidence type="ECO:0000269" key="14">
    <source>
    </source>
</evidence>
<evidence type="ECO:0000269" key="15">
    <source>
    </source>
</evidence>
<evidence type="ECO:0000269" key="16">
    <source>
    </source>
</evidence>
<evidence type="ECO:0000269" key="17">
    <source>
    </source>
</evidence>
<evidence type="ECO:0000269" key="18">
    <source>
    </source>
</evidence>
<evidence type="ECO:0000269" key="19">
    <source>
    </source>
</evidence>
<evidence type="ECO:0000269" key="20">
    <source>
    </source>
</evidence>
<evidence type="ECO:0000269" key="21">
    <source>
    </source>
</evidence>
<evidence type="ECO:0000269" key="22">
    <source>
    </source>
</evidence>
<evidence type="ECO:0000269" key="23">
    <source>
    </source>
</evidence>
<evidence type="ECO:0000269" key="24">
    <source>
    </source>
</evidence>
<evidence type="ECO:0000303" key="25">
    <source>
    </source>
</evidence>
<evidence type="ECO:0000305" key="26"/>
<evidence type="ECO:0000305" key="27">
    <source>
    </source>
</evidence>
<evidence type="ECO:0000312" key="28">
    <source>
        <dbReference type="HGNC" id="HGNC:6297"/>
    </source>
</evidence>
<evidence type="ECO:0007744" key="29">
    <source>
        <dbReference type="PDB" id="5J03"/>
    </source>
</evidence>
<evidence type="ECO:0007829" key="30">
    <source>
        <dbReference type="PDB" id="5J03"/>
    </source>
</evidence>
<accession>O43525</accession>
<accession>A2VCT8</accession>
<accession>B4DJY4</accession>
<accession>E7EQ89</accession>